<gene>
    <name evidence="7" type="primary">SBT4.8</name>
    <name evidence="9" type="ordered locus">At5g58830</name>
    <name evidence="10" type="ORF">K19M22.3</name>
</gene>
<reference key="1">
    <citation type="journal article" date="1998" name="DNA Res.">
        <title>Structural analysis of Arabidopsis thaliana chromosome 5. VIII. Sequence features of the regions of 1,081,958 bp covered by seventeen physically assigned P1 and TAC clones.</title>
        <authorList>
            <person name="Asamizu E."/>
            <person name="Sato S."/>
            <person name="Kaneko T."/>
            <person name="Nakamura Y."/>
            <person name="Kotani H."/>
            <person name="Miyajima N."/>
            <person name="Tabata S."/>
        </authorList>
    </citation>
    <scope>NUCLEOTIDE SEQUENCE [LARGE SCALE GENOMIC DNA]</scope>
    <source>
        <strain>cv. Columbia</strain>
    </source>
</reference>
<reference key="2">
    <citation type="journal article" date="2017" name="Plant J.">
        <title>Araport11: a complete reannotation of the Arabidopsis thaliana reference genome.</title>
        <authorList>
            <person name="Cheng C.Y."/>
            <person name="Krishnakumar V."/>
            <person name="Chan A.P."/>
            <person name="Thibaud-Nissen F."/>
            <person name="Schobel S."/>
            <person name="Town C.D."/>
        </authorList>
    </citation>
    <scope>GENOME REANNOTATION</scope>
    <source>
        <strain>cv. Columbia</strain>
    </source>
</reference>
<reference key="3">
    <citation type="journal article" date="2005" name="PLoS Comput. Biol.">
        <title>Inferring hypotheses on functional relationships of genes: Analysis of the Arabidopsis thaliana subtilase gene family.</title>
        <authorList>
            <person name="Rautengarten C."/>
            <person name="Steinhauser D."/>
            <person name="Bussis D."/>
            <person name="Stintzi A."/>
            <person name="Schaller A."/>
            <person name="Kopka J."/>
            <person name="Altmann T."/>
        </authorList>
    </citation>
    <scope>GENE FAMILY</scope>
    <scope>NOMENCLATURE</scope>
</reference>
<sequence length="710" mass="76221">MVKRASFCLLSCLIILFLSSVSAIIYDPQDKQVYVVYMGSLPSQPNYTPMSNHINILQEVTGESSIEGRLVRSYKRSFNGFSALLTESEREGVAEMEGVVSVFRSKNYKLQTTASWDFMGMKEGKNTKRNFAVESDTIIGFIDSGIWPESESFSDKGFGPPPKKWKGVCKGGKNFTCNNKLIGARDYTSEGTRDLQGHGTHTTSTAAGNAVADTSFFGIGNGTARGGVPASRVAAYKVCTITGCSDDNVLSAFDDAIADGVDLISVSLGGDYPSLYAEDTIAIGAFHAMAKGILTVHSAGNAGPNPTTVVSVAPWMLTVAATTTNRRFLTKVVLGNGKTLVGKSVNAFDLKGKKYPLEYGDYLNESLVKGKILVSRYLSGSEVAVSFITTDNKDYASISSRPLSVLSQDDFDSLVSYINSTRSPQGSVLKTEAIFNQLSPKVASFSSRGPNTIAVDILKPDISAPGVEILAAYSPLSLPSEDRRDKRRVKYSVLSGTSMACPHVTGVAAYIKTFHPDWSPSVIQSAIMTTAWQMNATGTGAESTEFAYGAGHVDPIAAINPGLVYELNKTDHISFLCGMNYTSKTLKLISGDAVICSGKTLQRNLNYPSMSAKLSESNSSFTVTFKRTVTNLGTANSTYKSKIVLNHGSKLNVKVSPSVLSMKSLKEKQSFTVTVSGSNIDPKLPSSANLIWSDGTHNVRSPIVVYIDGY</sequence>
<organism>
    <name type="scientific">Arabidopsis thaliana</name>
    <name type="common">Mouse-ear cress</name>
    <dbReference type="NCBI Taxonomy" id="3702"/>
    <lineage>
        <taxon>Eukaryota</taxon>
        <taxon>Viridiplantae</taxon>
        <taxon>Streptophyta</taxon>
        <taxon>Embryophyta</taxon>
        <taxon>Tracheophyta</taxon>
        <taxon>Spermatophyta</taxon>
        <taxon>Magnoliopsida</taxon>
        <taxon>eudicotyledons</taxon>
        <taxon>Gunneridae</taxon>
        <taxon>Pentapetalae</taxon>
        <taxon>rosids</taxon>
        <taxon>malvids</taxon>
        <taxon>Brassicales</taxon>
        <taxon>Brassicaceae</taxon>
        <taxon>Camelineae</taxon>
        <taxon>Arabidopsis</taxon>
    </lineage>
</organism>
<name>SBT48_ARATH</name>
<dbReference type="EC" id="3.4.21.-" evidence="6"/>
<dbReference type="EMBL" id="AB016885">
    <property type="protein sequence ID" value="BAB09628.1"/>
    <property type="molecule type" value="Genomic_DNA"/>
</dbReference>
<dbReference type="EMBL" id="CP002688">
    <property type="protein sequence ID" value="AED97108.2"/>
    <property type="molecule type" value="Genomic_DNA"/>
</dbReference>
<dbReference type="RefSeq" id="NP_001318833.1">
    <property type="nucleotide sequence ID" value="NM_001345324.1"/>
</dbReference>
<dbReference type="SMR" id="Q9FIM6"/>
<dbReference type="FunCoup" id="Q9FIM6">
    <property type="interactions" value="3"/>
</dbReference>
<dbReference type="MEROPS" id="S08.A12"/>
<dbReference type="GlyCosmos" id="Q9FIM6">
    <property type="glycosylation" value="9 sites, No reported glycans"/>
</dbReference>
<dbReference type="GlyGen" id="Q9FIM6">
    <property type="glycosylation" value="9 sites"/>
</dbReference>
<dbReference type="PaxDb" id="3702-AT5G58830.1"/>
<dbReference type="ProteomicsDB" id="232688"/>
<dbReference type="EnsemblPlants" id="AT5G58830.1">
    <property type="protein sequence ID" value="AT5G58830.1"/>
    <property type="gene ID" value="AT5G58830"/>
</dbReference>
<dbReference type="GeneID" id="836000"/>
<dbReference type="Gramene" id="AT5G58830.1">
    <property type="protein sequence ID" value="AT5G58830.1"/>
    <property type="gene ID" value="AT5G58830"/>
</dbReference>
<dbReference type="KEGG" id="ath:AT5G58830"/>
<dbReference type="Araport" id="AT5G58830"/>
<dbReference type="TAIR" id="AT5G58830"/>
<dbReference type="eggNOG" id="ENOG502QRA7">
    <property type="taxonomic scope" value="Eukaryota"/>
</dbReference>
<dbReference type="InParanoid" id="Q9FIM6"/>
<dbReference type="OMA" id="MRASSFC"/>
<dbReference type="PhylomeDB" id="Q9FIM6"/>
<dbReference type="PRO" id="PR:Q9FIM6"/>
<dbReference type="Proteomes" id="UP000006548">
    <property type="component" value="Chromosome 5"/>
</dbReference>
<dbReference type="ExpressionAtlas" id="Q9FIM6">
    <property type="expression patterns" value="baseline and differential"/>
</dbReference>
<dbReference type="GO" id="GO:0005576">
    <property type="term" value="C:extracellular region"/>
    <property type="evidence" value="ECO:0007669"/>
    <property type="project" value="UniProtKB-SubCell"/>
</dbReference>
<dbReference type="GO" id="GO:0004252">
    <property type="term" value="F:serine-type endopeptidase activity"/>
    <property type="evidence" value="ECO:0007669"/>
    <property type="project" value="InterPro"/>
</dbReference>
<dbReference type="GO" id="GO:0006508">
    <property type="term" value="P:proteolysis"/>
    <property type="evidence" value="ECO:0007669"/>
    <property type="project" value="UniProtKB-KW"/>
</dbReference>
<dbReference type="CDD" id="cd02120">
    <property type="entry name" value="PA_subtilisin_like"/>
    <property type="match status" value="1"/>
</dbReference>
<dbReference type="CDD" id="cd04852">
    <property type="entry name" value="Peptidases_S8_3"/>
    <property type="match status" value="1"/>
</dbReference>
<dbReference type="Gene3D" id="2.60.40.2310">
    <property type="match status" value="1"/>
</dbReference>
<dbReference type="Gene3D" id="3.50.30.30">
    <property type="match status" value="1"/>
</dbReference>
<dbReference type="Gene3D" id="3.30.70.80">
    <property type="entry name" value="Peptidase S8 propeptide/proteinase inhibitor I9"/>
    <property type="match status" value="1"/>
</dbReference>
<dbReference type="Gene3D" id="3.40.50.200">
    <property type="entry name" value="Peptidase S8/S53 domain"/>
    <property type="match status" value="1"/>
</dbReference>
<dbReference type="InterPro" id="IPR000209">
    <property type="entry name" value="Peptidase_S8/S53_dom"/>
</dbReference>
<dbReference type="InterPro" id="IPR036852">
    <property type="entry name" value="Peptidase_S8/S53_dom_sf"/>
</dbReference>
<dbReference type="InterPro" id="IPR023828">
    <property type="entry name" value="Peptidase_S8_Ser-AS"/>
</dbReference>
<dbReference type="InterPro" id="IPR015500">
    <property type="entry name" value="Peptidase_S8_subtilisin-rel"/>
</dbReference>
<dbReference type="InterPro" id="IPR034197">
    <property type="entry name" value="Peptidases_S8_3"/>
</dbReference>
<dbReference type="InterPro" id="IPR010259">
    <property type="entry name" value="S8pro/Inhibitor_I9"/>
</dbReference>
<dbReference type="InterPro" id="IPR037045">
    <property type="entry name" value="S8pro/Inhibitor_I9_sf"/>
</dbReference>
<dbReference type="InterPro" id="IPR045051">
    <property type="entry name" value="SBT"/>
</dbReference>
<dbReference type="InterPro" id="IPR041469">
    <property type="entry name" value="Subtilisin-like_FN3"/>
</dbReference>
<dbReference type="PANTHER" id="PTHR10795">
    <property type="entry name" value="PROPROTEIN CONVERTASE SUBTILISIN/KEXIN"/>
    <property type="match status" value="1"/>
</dbReference>
<dbReference type="Pfam" id="PF17766">
    <property type="entry name" value="fn3_6"/>
    <property type="match status" value="1"/>
</dbReference>
<dbReference type="Pfam" id="PF05922">
    <property type="entry name" value="Inhibitor_I9"/>
    <property type="match status" value="1"/>
</dbReference>
<dbReference type="Pfam" id="PF00082">
    <property type="entry name" value="Peptidase_S8"/>
    <property type="match status" value="1"/>
</dbReference>
<dbReference type="PRINTS" id="PR00723">
    <property type="entry name" value="SUBTILISIN"/>
</dbReference>
<dbReference type="SUPFAM" id="SSF52743">
    <property type="entry name" value="Subtilisin-like"/>
    <property type="match status" value="1"/>
</dbReference>
<dbReference type="PROSITE" id="PS51892">
    <property type="entry name" value="SUBTILASE"/>
    <property type="match status" value="1"/>
</dbReference>
<dbReference type="PROSITE" id="PS00138">
    <property type="entry name" value="SUBTILASE_SER"/>
    <property type="match status" value="1"/>
</dbReference>
<keyword id="KW-0068">Autocatalytic cleavage</keyword>
<keyword id="KW-0325">Glycoprotein</keyword>
<keyword id="KW-0378">Hydrolase</keyword>
<keyword id="KW-0645">Protease</keyword>
<keyword id="KW-1185">Reference proteome</keyword>
<keyword id="KW-0964">Secreted</keyword>
<keyword id="KW-0720">Serine protease</keyword>
<keyword id="KW-0732">Signal</keyword>
<keyword id="KW-0865">Zymogen</keyword>
<proteinExistence type="inferred from homology"/>
<comment type="subcellular location">
    <subcellularLocation>
        <location evidence="2">Secreted</location>
    </subcellularLocation>
</comment>
<comment type="PTM">
    <text evidence="1">The C-terminal propeptide is autocleaved.</text>
</comment>
<comment type="similarity">
    <text evidence="8">Belongs to the peptidase S8 family.</text>
</comment>
<protein>
    <recommendedName>
        <fullName evidence="7">Subtilisin-like protease SBT4.8</fullName>
        <ecNumber evidence="6">3.4.21.-</ecNumber>
    </recommendedName>
    <alternativeName>
        <fullName evidence="7">Subtilase subfamily 4 member 8</fullName>
        <shortName evidence="7">AtSBT4.8</shortName>
    </alternativeName>
</protein>
<evidence type="ECO:0000250" key="1">
    <source>
        <dbReference type="UniProtKB" id="Q39547"/>
    </source>
</evidence>
<evidence type="ECO:0000250" key="2">
    <source>
        <dbReference type="UniProtKB" id="Q84WS0"/>
    </source>
</evidence>
<evidence type="ECO:0000255" key="3"/>
<evidence type="ECO:0000255" key="4">
    <source>
        <dbReference type="PROSITE-ProRule" id="PRU00498"/>
    </source>
</evidence>
<evidence type="ECO:0000255" key="5">
    <source>
        <dbReference type="PROSITE-ProRule" id="PRU01240"/>
    </source>
</evidence>
<evidence type="ECO:0000255" key="6">
    <source>
        <dbReference type="PROSITE-ProRule" id="PRU10082"/>
    </source>
</evidence>
<evidence type="ECO:0000303" key="7">
    <source>
    </source>
</evidence>
<evidence type="ECO:0000305" key="8"/>
<evidence type="ECO:0000312" key="9">
    <source>
        <dbReference type="Araport" id="AT5G58830"/>
    </source>
</evidence>
<evidence type="ECO:0000312" key="10">
    <source>
        <dbReference type="EMBL" id="BAB09628.1"/>
    </source>
</evidence>
<feature type="signal peptide" evidence="3">
    <location>
        <begin position="1"/>
        <end position="23"/>
    </location>
</feature>
<feature type="propeptide" id="PRO_0000435240" description="Activation peptide" evidence="1">
    <location>
        <begin position="24"/>
        <end position="111"/>
    </location>
</feature>
<feature type="chain" id="PRO_5004329286" description="Subtilisin-like protease SBT4.8" evidence="3">
    <location>
        <begin position="112"/>
        <end status="unknown"/>
    </location>
</feature>
<feature type="propeptide" id="PRO_0000435241" evidence="1">
    <location>
        <begin status="unknown"/>
        <end position="710"/>
    </location>
</feature>
<feature type="domain" description="Inhibitor I9" evidence="3">
    <location>
        <begin position="33"/>
        <end position="110"/>
    </location>
</feature>
<feature type="domain" description="Peptidase S8" evidence="5">
    <location>
        <begin position="115"/>
        <end position="559"/>
    </location>
</feature>
<feature type="domain" description="PA" evidence="3">
    <location>
        <begin position="354"/>
        <end position="414"/>
    </location>
</feature>
<feature type="active site" description="Charge relay system" evidence="5">
    <location>
        <position position="143"/>
    </location>
</feature>
<feature type="active site" description="Charge relay system" evidence="5">
    <location>
        <position position="198"/>
    </location>
</feature>
<feature type="active site" description="Charge relay system" evidence="5">
    <location>
        <position position="498"/>
    </location>
</feature>
<feature type="glycosylation site" description="N-linked (GlcNAc...) asparagine" evidence="4">
    <location>
        <position position="174"/>
    </location>
</feature>
<feature type="glycosylation site" description="N-linked (GlcNAc...) asparagine" evidence="4">
    <location>
        <position position="221"/>
    </location>
</feature>
<feature type="glycosylation site" description="N-linked (GlcNAc...) asparagine" evidence="4">
    <location>
        <position position="364"/>
    </location>
</feature>
<feature type="glycosylation site" description="N-linked (GlcNAc...) asparagine" evidence="4">
    <location>
        <position position="419"/>
    </location>
</feature>
<feature type="glycosylation site" description="N-linked (GlcNAc...) asparagine" evidence="4">
    <location>
        <position position="535"/>
    </location>
</feature>
<feature type="glycosylation site" description="N-linked (GlcNAc...) asparagine" evidence="4">
    <location>
        <position position="568"/>
    </location>
</feature>
<feature type="glycosylation site" description="N-linked (GlcNAc...) asparagine" evidence="4">
    <location>
        <position position="580"/>
    </location>
</feature>
<feature type="glycosylation site" description="N-linked (GlcNAc...) asparagine" evidence="4">
    <location>
        <position position="618"/>
    </location>
</feature>
<feature type="glycosylation site" description="N-linked (GlcNAc...) asparagine" evidence="4">
    <location>
        <position position="636"/>
    </location>
</feature>
<accession>Q9FIM6</accession>
<accession>F4KGD5</accession>